<gene>
    <name evidence="1" type="primary">SPB1</name>
    <name type="ordered locus">CNBB3110</name>
</gene>
<name>SPB1_CRYNB</name>
<organism>
    <name type="scientific">Cryptococcus neoformans var. neoformans serotype D (strain B-3501A)</name>
    <name type="common">Filobasidiella neoformans</name>
    <dbReference type="NCBI Taxonomy" id="283643"/>
    <lineage>
        <taxon>Eukaryota</taxon>
        <taxon>Fungi</taxon>
        <taxon>Dikarya</taxon>
        <taxon>Basidiomycota</taxon>
        <taxon>Agaricomycotina</taxon>
        <taxon>Tremellomycetes</taxon>
        <taxon>Tremellales</taxon>
        <taxon>Cryptococcaceae</taxon>
        <taxon>Cryptococcus</taxon>
        <taxon>Cryptococcus neoformans species complex</taxon>
    </lineage>
</organism>
<feature type="chain" id="PRO_0000410271" description="AdoMet-dependent rRNA methyltransferase SPB1">
    <location>
        <begin position="1"/>
        <end position="908"/>
    </location>
</feature>
<feature type="region of interest" description="Disordered" evidence="2">
    <location>
        <begin position="440"/>
        <end position="513"/>
    </location>
</feature>
<feature type="region of interest" description="Disordered" evidence="2">
    <location>
        <begin position="535"/>
        <end position="715"/>
    </location>
</feature>
<feature type="region of interest" description="Disordered" evidence="2">
    <location>
        <begin position="806"/>
        <end position="841"/>
    </location>
</feature>
<feature type="coiled-coil region" evidence="1">
    <location>
        <begin position="378"/>
        <end position="422"/>
    </location>
</feature>
<feature type="compositionally biased region" description="Acidic residues" evidence="2">
    <location>
        <begin position="464"/>
        <end position="493"/>
    </location>
</feature>
<feature type="compositionally biased region" description="Basic and acidic residues" evidence="2">
    <location>
        <begin position="535"/>
        <end position="545"/>
    </location>
</feature>
<feature type="compositionally biased region" description="Acidic residues" evidence="2">
    <location>
        <begin position="546"/>
        <end position="564"/>
    </location>
</feature>
<feature type="compositionally biased region" description="Acidic residues" evidence="2">
    <location>
        <begin position="579"/>
        <end position="591"/>
    </location>
</feature>
<feature type="compositionally biased region" description="Basic and acidic residues" evidence="2">
    <location>
        <begin position="592"/>
        <end position="610"/>
    </location>
</feature>
<feature type="compositionally biased region" description="Acidic residues" evidence="2">
    <location>
        <begin position="650"/>
        <end position="678"/>
    </location>
</feature>
<feature type="compositionally biased region" description="Acidic residues" evidence="2">
    <location>
        <begin position="685"/>
        <end position="712"/>
    </location>
</feature>
<feature type="compositionally biased region" description="Basic and acidic residues" evidence="2">
    <location>
        <begin position="816"/>
        <end position="827"/>
    </location>
</feature>
<feature type="active site" description="Proton acceptor" evidence="1">
    <location>
        <position position="158"/>
    </location>
</feature>
<feature type="binding site" evidence="1">
    <location>
        <position position="57"/>
    </location>
    <ligand>
        <name>S-adenosyl-L-methionine</name>
        <dbReference type="ChEBI" id="CHEBI:59789"/>
    </ligand>
</feature>
<feature type="binding site" evidence="1">
    <location>
        <position position="59"/>
    </location>
    <ligand>
        <name>S-adenosyl-L-methionine</name>
        <dbReference type="ChEBI" id="CHEBI:59789"/>
    </ligand>
</feature>
<feature type="binding site" evidence="1">
    <location>
        <position position="77"/>
    </location>
    <ligand>
        <name>S-adenosyl-L-methionine</name>
        <dbReference type="ChEBI" id="CHEBI:59789"/>
    </ligand>
</feature>
<feature type="binding site" evidence="1">
    <location>
        <position position="93"/>
    </location>
    <ligand>
        <name>S-adenosyl-L-methionine</name>
        <dbReference type="ChEBI" id="CHEBI:59789"/>
    </ligand>
</feature>
<feature type="binding site" evidence="1">
    <location>
        <position position="118"/>
    </location>
    <ligand>
        <name>S-adenosyl-L-methionine</name>
        <dbReference type="ChEBI" id="CHEBI:59789"/>
    </ligand>
</feature>
<sequence length="908" mass="102094">MGKHDKKTGKGRLDKFYRLAKEQGYRARSAFKLVHLNRKYDLLSKARCCIDLCAAPGGWLQVAEKYMPKGSLIIGVDLNAIKPLPHVTTFVADITTPHCRQTLRQHMHDWKADLVLHDGAPNVGSAWVQDAFTQNELVLQSLKLATEFLAKGGSFVTKVFRSQDYNSLLWVFGQLFKSVEATKPPSSRNVSAEIFVVCRDFIAPKHIDPKFLDPKHVFKDIASLPTSITEPTDTSIAPTSSSTASAAAAAARLAANSHAHSNVYAPEKKRRHREGYAEGDYTLHHTASAEEFVRGQDPVLLLGNMNKIEFRNETEKGWLKSRHTTPDIIANFEDLKVLGKGDFKALMKWRLAIRLEIGLDVKADKTQDATEEVVVEPMDEEEQITEELQKLQQAKLAKTKRERKRANEKKARELLKLQLNMTVPDDLDQNDLALQGEEEIFDLEEGENEARRRGKNGGLATLVDDGEGMDLASESEEEEDEDEEDDEVLDSDEERERKTAALEGELDGLYDSYVERKKERDAKWKVKQDRLKDKNFDAWHGIQEKSDEEGSDDDDGQDDDEEGGWDVIAQKKAKYGEGDSSDSDSDAEPETEVPKKIKKVSFEKPARSEKSSGLMTSLREPELRAQRSKQAQLWFDQPVFKEVGDLAALDGDDEEEEEEDESEEEESDDEDVDMEDASESSSTLEGDDDFEIVPQAPEDDGPEWDVDDEDQDEVKKKVIQDKGLLTAEAVSLATALVNRKTTADKLIDQGFNRLSAHNKDGLPTWFLDDESQFYKPNIPITKEAVDALRARQRALDARPIKKVAEAKGRKKMKAVARMEKAKKKADGVMESEEMGDGEKARQVRRMLARAAKGKEKAKEKKIVVAKGVNKGVKGRPTGVKGKYKIVDARMRKEVRALKRIKKAGSKRR</sequence>
<proteinExistence type="inferred from homology"/>
<reference key="1">
    <citation type="journal article" date="2005" name="Science">
        <title>The genome of the basidiomycetous yeast and human pathogen Cryptococcus neoformans.</title>
        <authorList>
            <person name="Loftus B.J."/>
            <person name="Fung E."/>
            <person name="Roncaglia P."/>
            <person name="Rowley D."/>
            <person name="Amedeo P."/>
            <person name="Bruno D."/>
            <person name="Vamathevan J."/>
            <person name="Miranda M."/>
            <person name="Anderson I.J."/>
            <person name="Fraser J.A."/>
            <person name="Allen J.E."/>
            <person name="Bosdet I.E."/>
            <person name="Brent M.R."/>
            <person name="Chiu R."/>
            <person name="Doering T.L."/>
            <person name="Donlin M.J."/>
            <person name="D'Souza C.A."/>
            <person name="Fox D.S."/>
            <person name="Grinberg V."/>
            <person name="Fu J."/>
            <person name="Fukushima M."/>
            <person name="Haas B.J."/>
            <person name="Huang J.C."/>
            <person name="Janbon G."/>
            <person name="Jones S.J.M."/>
            <person name="Koo H.L."/>
            <person name="Krzywinski M.I."/>
            <person name="Kwon-Chung K.J."/>
            <person name="Lengeler K.B."/>
            <person name="Maiti R."/>
            <person name="Marra M.A."/>
            <person name="Marra R.E."/>
            <person name="Mathewson C.A."/>
            <person name="Mitchell T.G."/>
            <person name="Pertea M."/>
            <person name="Riggs F.R."/>
            <person name="Salzberg S.L."/>
            <person name="Schein J.E."/>
            <person name="Shvartsbeyn A."/>
            <person name="Shin H."/>
            <person name="Shumway M."/>
            <person name="Specht C.A."/>
            <person name="Suh B.B."/>
            <person name="Tenney A."/>
            <person name="Utterback T.R."/>
            <person name="Wickes B.L."/>
            <person name="Wortman J.R."/>
            <person name="Wye N.H."/>
            <person name="Kronstad J.W."/>
            <person name="Lodge J.K."/>
            <person name="Heitman J."/>
            <person name="Davis R.W."/>
            <person name="Fraser C.M."/>
            <person name="Hyman R.W."/>
        </authorList>
    </citation>
    <scope>NUCLEOTIDE SEQUENCE [LARGE SCALE GENOMIC DNA]</scope>
    <source>
        <strain>B-3501A</strain>
    </source>
</reference>
<evidence type="ECO:0000255" key="1">
    <source>
        <dbReference type="HAMAP-Rule" id="MF_03163"/>
    </source>
</evidence>
<evidence type="ECO:0000256" key="2">
    <source>
        <dbReference type="SAM" id="MobiDB-lite"/>
    </source>
</evidence>
<accession>P0CS79</accession>
<accession>Q55XQ3</accession>
<accession>Q5KM86</accession>
<dbReference type="EC" id="2.1.1.-" evidence="1"/>
<dbReference type="EMBL" id="AAEY01000010">
    <property type="protein sequence ID" value="EAL22432.1"/>
    <property type="molecule type" value="Genomic_DNA"/>
</dbReference>
<dbReference type="RefSeq" id="XP_777079.1">
    <property type="nucleotide sequence ID" value="XM_771986.1"/>
</dbReference>
<dbReference type="SMR" id="P0CS79"/>
<dbReference type="EnsemblFungi" id="AAW41873">
    <property type="protein sequence ID" value="AAW41873"/>
    <property type="gene ID" value="CNB02570"/>
</dbReference>
<dbReference type="GeneID" id="4934404"/>
<dbReference type="KEGG" id="cnb:CNBB3110"/>
<dbReference type="VEuPathDB" id="FungiDB:CNBB3110"/>
<dbReference type="HOGENOM" id="CLU_009422_8_1_1"/>
<dbReference type="OrthoDB" id="8409at5206"/>
<dbReference type="GO" id="GO:0005730">
    <property type="term" value="C:nucleolus"/>
    <property type="evidence" value="ECO:0007669"/>
    <property type="project" value="UniProtKB-SubCell"/>
</dbReference>
<dbReference type="GO" id="GO:0030687">
    <property type="term" value="C:preribosome, large subunit precursor"/>
    <property type="evidence" value="ECO:0007669"/>
    <property type="project" value="UniProtKB-UniRule"/>
</dbReference>
<dbReference type="GO" id="GO:0070039">
    <property type="term" value="F:rRNA (guanosine-2'-O-)-methyltransferase activity"/>
    <property type="evidence" value="ECO:0007669"/>
    <property type="project" value="UniProtKB-UniRule"/>
</dbReference>
<dbReference type="GO" id="GO:0008650">
    <property type="term" value="F:rRNA (uridine-2'-O-)-methyltransferase activity"/>
    <property type="evidence" value="ECO:0007669"/>
    <property type="project" value="UniProtKB-UniRule"/>
</dbReference>
<dbReference type="GO" id="GO:0000466">
    <property type="term" value="P:maturation of 5.8S rRNA from tricistronic rRNA transcript (SSU-rRNA, 5.8S rRNA, LSU-rRNA)"/>
    <property type="evidence" value="ECO:0007669"/>
    <property type="project" value="EnsemblFungi"/>
</dbReference>
<dbReference type="GO" id="GO:0000463">
    <property type="term" value="P:maturation of LSU-rRNA from tricistronic rRNA transcript (SSU-rRNA, 5.8S rRNA, LSU-rRNA)"/>
    <property type="evidence" value="ECO:0007669"/>
    <property type="project" value="EnsemblFungi"/>
</dbReference>
<dbReference type="FunFam" id="3.40.50.150:FF:000004">
    <property type="entry name" value="AdoMet-dependent rRNA methyltransferase SPB1"/>
    <property type="match status" value="1"/>
</dbReference>
<dbReference type="Gene3D" id="3.40.50.150">
    <property type="entry name" value="Vaccinia Virus protein VP39"/>
    <property type="match status" value="1"/>
</dbReference>
<dbReference type="HAMAP" id="MF_01547">
    <property type="entry name" value="RNA_methyltr_E"/>
    <property type="match status" value="1"/>
</dbReference>
<dbReference type="HAMAP" id="MF_03163">
    <property type="entry name" value="RNA_methyltr_E_SPB1"/>
    <property type="match status" value="1"/>
</dbReference>
<dbReference type="InterPro" id="IPR050082">
    <property type="entry name" value="RNA_methyltr_RlmE"/>
</dbReference>
<dbReference type="InterPro" id="IPR002877">
    <property type="entry name" value="RNA_MeTrfase_FtsJ_dom"/>
</dbReference>
<dbReference type="InterPro" id="IPR015507">
    <property type="entry name" value="rRNA-MeTfrase_E"/>
</dbReference>
<dbReference type="InterPro" id="IPR012920">
    <property type="entry name" value="rRNA_MeTfrase_SPB1-like_C"/>
</dbReference>
<dbReference type="InterPro" id="IPR024576">
    <property type="entry name" value="rRNA_MeTfrase_Spb1_DUF3381"/>
</dbReference>
<dbReference type="InterPro" id="IPR029063">
    <property type="entry name" value="SAM-dependent_MTases_sf"/>
</dbReference>
<dbReference type="InterPro" id="IPR028589">
    <property type="entry name" value="SPB1-like"/>
</dbReference>
<dbReference type="PANTHER" id="PTHR10920:SF13">
    <property type="entry name" value="PRE-RRNA 2'-O-RIBOSE RNA METHYLTRANSFERASE FTSJ3"/>
    <property type="match status" value="1"/>
</dbReference>
<dbReference type="PANTHER" id="PTHR10920">
    <property type="entry name" value="RIBOSOMAL RNA METHYLTRANSFERASE"/>
    <property type="match status" value="1"/>
</dbReference>
<dbReference type="Pfam" id="PF11861">
    <property type="entry name" value="DUF3381"/>
    <property type="match status" value="1"/>
</dbReference>
<dbReference type="Pfam" id="PF01728">
    <property type="entry name" value="FtsJ"/>
    <property type="match status" value="1"/>
</dbReference>
<dbReference type="Pfam" id="PF07780">
    <property type="entry name" value="Spb1_C"/>
    <property type="match status" value="1"/>
</dbReference>
<dbReference type="SUPFAM" id="SSF53335">
    <property type="entry name" value="S-adenosyl-L-methionine-dependent methyltransferases"/>
    <property type="match status" value="1"/>
</dbReference>
<comment type="function">
    <text evidence="1">Required for proper assembly of pre-ribosomal particles during the biogenesis of the 60S ribosomal subunit.</text>
</comment>
<comment type="catalytic activity">
    <reaction evidence="1">
        <text>a ribonucleotide in rRNA + S-adenosyl-L-methionine = a 2'-O-methylribonucleotide in rRNA + S-adenosyl-L-homocysteine + H(+)</text>
        <dbReference type="Rhea" id="RHEA:48628"/>
        <dbReference type="Rhea" id="RHEA-COMP:12164"/>
        <dbReference type="Rhea" id="RHEA-COMP:12165"/>
        <dbReference type="ChEBI" id="CHEBI:15378"/>
        <dbReference type="ChEBI" id="CHEBI:57856"/>
        <dbReference type="ChEBI" id="CHEBI:59789"/>
        <dbReference type="ChEBI" id="CHEBI:90675"/>
        <dbReference type="ChEBI" id="CHEBI:90676"/>
    </reaction>
</comment>
<comment type="subunit">
    <text evidence="1">Component of the nucleolar and nucleoplasmic pre-60S ribosomal particle.</text>
</comment>
<comment type="subcellular location">
    <subcellularLocation>
        <location evidence="1">Nucleus</location>
        <location evidence="1">Nucleolus</location>
    </subcellularLocation>
</comment>
<comment type="similarity">
    <text evidence="1">Belongs to the class I-like SAM-binding methyltransferase superfamily. RNA methyltransferase RlmE family. SPB1 subfamily.</text>
</comment>
<keyword id="KW-0175">Coiled coil</keyword>
<keyword id="KW-0489">Methyltransferase</keyword>
<keyword id="KW-0539">Nucleus</keyword>
<keyword id="KW-0690">Ribosome biogenesis</keyword>
<keyword id="KW-0698">rRNA processing</keyword>
<keyword id="KW-0949">S-adenosyl-L-methionine</keyword>
<keyword id="KW-0808">Transferase</keyword>
<protein>
    <recommendedName>
        <fullName evidence="1">AdoMet-dependent rRNA methyltransferase SPB1</fullName>
        <ecNumber evidence="1">2.1.1.-</ecNumber>
    </recommendedName>
    <alternativeName>
        <fullName evidence="1">2'-O-ribose RNA methyltransferase</fullName>
    </alternativeName>
    <alternativeName>
        <fullName evidence="1">S-adenosyl-L-methionine-dependent methyltransferase</fullName>
    </alternativeName>
</protein>